<keyword id="KW-1185">Reference proteome</keyword>
<evidence type="ECO:0000255" key="1">
    <source>
        <dbReference type="HAMAP-Rule" id="MF_01845"/>
    </source>
</evidence>
<accession>A3D738</accession>
<feature type="chain" id="PRO_0000339844" description="UPF0597 protein Sbal_3070">
    <location>
        <begin position="1"/>
        <end position="424"/>
    </location>
</feature>
<name>Y3070_SHEB5</name>
<dbReference type="EMBL" id="CP000563">
    <property type="protein sequence ID" value="ABN62551.1"/>
    <property type="molecule type" value="Genomic_DNA"/>
</dbReference>
<dbReference type="RefSeq" id="WP_011847397.1">
    <property type="nucleotide sequence ID" value="NC_009052.1"/>
</dbReference>
<dbReference type="SMR" id="A3D738"/>
<dbReference type="STRING" id="325240.Sbal_3070"/>
<dbReference type="GeneID" id="11773274"/>
<dbReference type="KEGG" id="sbl:Sbal_3070"/>
<dbReference type="HOGENOM" id="CLU_051840_0_0_6"/>
<dbReference type="OrthoDB" id="41906at2"/>
<dbReference type="Proteomes" id="UP000001557">
    <property type="component" value="Chromosome"/>
</dbReference>
<dbReference type="GO" id="GO:0080146">
    <property type="term" value="F:L-cysteine desulfhydrase activity"/>
    <property type="evidence" value="ECO:0007669"/>
    <property type="project" value="TreeGrafter"/>
</dbReference>
<dbReference type="GO" id="GO:0019450">
    <property type="term" value="P:L-cysteine catabolic process to pyruvate"/>
    <property type="evidence" value="ECO:0007669"/>
    <property type="project" value="TreeGrafter"/>
</dbReference>
<dbReference type="HAMAP" id="MF_01845">
    <property type="entry name" value="UPF0597"/>
    <property type="match status" value="1"/>
</dbReference>
<dbReference type="InterPro" id="IPR005130">
    <property type="entry name" value="Ser_deHydtase-like_asu"/>
</dbReference>
<dbReference type="InterPro" id="IPR021144">
    <property type="entry name" value="UPF0597"/>
</dbReference>
<dbReference type="PANTHER" id="PTHR30501">
    <property type="entry name" value="UPF0597 PROTEIN YHAM"/>
    <property type="match status" value="1"/>
</dbReference>
<dbReference type="PANTHER" id="PTHR30501:SF2">
    <property type="entry name" value="UPF0597 PROTEIN YHAM"/>
    <property type="match status" value="1"/>
</dbReference>
<dbReference type="Pfam" id="PF03313">
    <property type="entry name" value="SDH_alpha"/>
    <property type="match status" value="1"/>
</dbReference>
<dbReference type="PIRSF" id="PIRSF006054">
    <property type="entry name" value="UCP006054"/>
    <property type="match status" value="1"/>
</dbReference>
<proteinExistence type="inferred from homology"/>
<organism>
    <name type="scientific">Shewanella baltica (strain OS155 / ATCC BAA-1091)</name>
    <dbReference type="NCBI Taxonomy" id="325240"/>
    <lineage>
        <taxon>Bacteria</taxon>
        <taxon>Pseudomonadati</taxon>
        <taxon>Pseudomonadota</taxon>
        <taxon>Gammaproteobacteria</taxon>
        <taxon>Alteromonadales</taxon>
        <taxon>Shewanellaceae</taxon>
        <taxon>Shewanella</taxon>
    </lineage>
</organism>
<gene>
    <name type="ordered locus">Sbal_3070</name>
</gene>
<reference key="1">
    <citation type="submission" date="2007-02" db="EMBL/GenBank/DDBJ databases">
        <title>Complete sequence of chromosome of Shewanella baltica OS155.</title>
        <authorList>
            <consortium name="US DOE Joint Genome Institute"/>
            <person name="Copeland A."/>
            <person name="Lucas S."/>
            <person name="Lapidus A."/>
            <person name="Barry K."/>
            <person name="Detter J.C."/>
            <person name="Glavina del Rio T."/>
            <person name="Hammon N."/>
            <person name="Israni S."/>
            <person name="Dalin E."/>
            <person name="Tice H."/>
            <person name="Pitluck S."/>
            <person name="Sims D.R."/>
            <person name="Brettin T."/>
            <person name="Bruce D."/>
            <person name="Han C."/>
            <person name="Tapia R."/>
            <person name="Brainard J."/>
            <person name="Schmutz J."/>
            <person name="Larimer F."/>
            <person name="Land M."/>
            <person name="Hauser L."/>
            <person name="Kyrpides N."/>
            <person name="Mikhailova N."/>
            <person name="Brettar I."/>
            <person name="Klappenbach J."/>
            <person name="Konstantinidis K."/>
            <person name="Rodrigues J."/>
            <person name="Tiedje J."/>
            <person name="Richardson P."/>
        </authorList>
    </citation>
    <scope>NUCLEOTIDE SEQUENCE [LARGE SCALE GENOMIC DNA]</scope>
    <source>
        <strain>OS155 / ATCC BAA-1091</strain>
    </source>
</reference>
<sequence length="424" mass="43991">MKPQWQQYINIIKQVVKPALGCTEPIAAAYAAAVARALLGVEPDSIAVQVSDNLYKNSMGVFVPGTGKIGLAIAAAAGAIAGNPDAGLEVLAVITPEQVAKAQALIDAGKVTVERTETAEFIYCCVIAKKGDREALVKICGGHTLIAEKRLNGESVFSVDSTQAKATGSICEGVDITIESIYRFAQEVPFEEIKFILEASELNGKLSDEGMANPYGLEVGRTMKSGIAAGIIGEDLLNKIVMLTAAASDARMGGANLPAMSNLGSGNQGIAATIPVVLTAQCYKVSEEQLARALIMSHLGAIYIKSHYPPLSAFCGNTVTSAAASMAMVYLAGGSFEQSCFAIQNVISDSSGMVCDGAKASCAMKVSTSSSAAVRSFLMALSSHNVSGQGIIATDVEKTIKNIGKMILNGMSSTDVTIIDIMSA</sequence>
<protein>
    <recommendedName>
        <fullName evidence="1">UPF0597 protein Sbal_3070</fullName>
    </recommendedName>
</protein>
<comment type="similarity">
    <text evidence="1">Belongs to the UPF0597 family.</text>
</comment>